<comment type="function">
    <text evidence="4 5 6 7 9">Binds RuBisCO small and large subunits and is implicated in the assembly of the enzyme oligomer. Involved in protein assisted folding. Required for proper plastid division.</text>
</comment>
<comment type="subunit">
    <text evidence="5 6 9">Part of the Cpn60 complex composed of 7 alpha and 7 beta subunits. Can also form a complex composed of 14 beta subunits only. Both complexes show ATPase activity. The Cpn60 complex interacts with the Cpn10 complex. Interacts with RAB during heat stress.</text>
</comment>
<comment type="subcellular location">
    <subcellularLocation>
        <location evidence="7">Plastid</location>
        <location evidence="7">Chloroplast stroma</location>
    </subcellularLocation>
</comment>
<comment type="tissue specificity">
    <text evidence="8">Expressed in leaves, stems, petioles and flowers.</text>
</comment>
<comment type="induction">
    <text evidence="3 8">Up-regulated by light. Down-regulated by wounding. Not induced by heat.</text>
</comment>
<comment type="disruption phenotype">
    <text evidence="4 7">Normal germination, but chloroplast-division defect and late dwarf phenotype. Lesion formation on leaves when grown under short-day conditions. Cpn60B1 and cpn60B2 double mutant produces small albino seedlings.</text>
</comment>
<comment type="miscellaneous">
    <text>Assisted protein folding requires ATP hydrolysis, but not K(+) ions.</text>
</comment>
<comment type="similarity">
    <text evidence="10">Belongs to the chaperonin (HSP60) family.</text>
</comment>
<organism>
    <name type="scientific">Arabidopsis thaliana</name>
    <name type="common">Mouse-ear cress</name>
    <dbReference type="NCBI Taxonomy" id="3702"/>
    <lineage>
        <taxon>Eukaryota</taxon>
        <taxon>Viridiplantae</taxon>
        <taxon>Streptophyta</taxon>
        <taxon>Embryophyta</taxon>
        <taxon>Tracheophyta</taxon>
        <taxon>Spermatophyta</taxon>
        <taxon>Magnoliopsida</taxon>
        <taxon>eudicotyledons</taxon>
        <taxon>Gunneridae</taxon>
        <taxon>Pentapetalae</taxon>
        <taxon>rosids</taxon>
        <taxon>malvids</taxon>
        <taxon>Brassicales</taxon>
        <taxon>Brassicaceae</taxon>
        <taxon>Camelineae</taxon>
        <taxon>Arabidopsis</taxon>
    </lineage>
</organism>
<feature type="transit peptide" description="Chloroplast" evidence="5">
    <location>
        <begin position="1"/>
        <end position="54"/>
    </location>
</feature>
<feature type="chain" id="PRO_0000005022" description="Chaperonin 60 subunit beta 1, chloroplastic">
    <location>
        <begin position="55"/>
        <end position="600"/>
    </location>
</feature>
<feature type="region of interest" description="Disordered" evidence="2">
    <location>
        <begin position="1"/>
        <end position="23"/>
    </location>
</feature>
<feature type="compositionally biased region" description="Polar residues" evidence="2">
    <location>
        <begin position="1"/>
        <end position="12"/>
    </location>
</feature>
<feature type="modified residue" description="Phosphoserine" evidence="1">
    <location>
        <position position="101"/>
    </location>
</feature>
<feature type="modified residue" description="Phosphoserine" evidence="11">
    <location>
        <position position="478"/>
    </location>
</feature>
<feature type="sequence conflict" description="In Ref. 2; AAA32725." evidence="10" ref="2">
    <original>Y</original>
    <variation>H</variation>
    <location>
        <position position="242"/>
    </location>
</feature>
<proteinExistence type="evidence at protein level"/>
<name>CPNB1_ARATH</name>
<keyword id="KW-0067">ATP-binding</keyword>
<keyword id="KW-0143">Chaperone</keyword>
<keyword id="KW-0150">Chloroplast</keyword>
<keyword id="KW-0903">Direct protein sequencing</keyword>
<keyword id="KW-0547">Nucleotide-binding</keyword>
<keyword id="KW-0597">Phosphoprotein</keyword>
<keyword id="KW-0934">Plastid</keyword>
<keyword id="KW-1185">Reference proteome</keyword>
<keyword id="KW-0809">Transit peptide</keyword>
<gene>
    <name type="primary">CPN60B1</name>
    <name type="synonym">Cpn60-B(3)</name>
    <name type="synonym">LEN1</name>
    <name type="ordered locus">At1g55490</name>
    <name type="ORF">T5A14.11</name>
</gene>
<reference key="1">
    <citation type="journal article" date="1992" name="Gene">
        <title>Isolation and characterization of genes encoding chaperonin 60 beta from Arabidopsis thaliana.</title>
        <authorList>
            <person name="Zabaleta E."/>
            <person name="Oropeza A."/>
            <person name="Jimenez B."/>
            <person name="Salerno G."/>
            <person name="Crespi M."/>
            <person name="Herrera-Estrella L."/>
        </authorList>
    </citation>
    <scope>NUCLEOTIDE SEQUENCE [GENOMIC DNA / MRNA]</scope>
</reference>
<reference key="2">
    <citation type="journal article" date="2000" name="Nature">
        <title>Sequence and analysis of chromosome 1 of the plant Arabidopsis thaliana.</title>
        <authorList>
            <person name="Theologis A."/>
            <person name="Ecker J.R."/>
            <person name="Palm C.J."/>
            <person name="Federspiel N.A."/>
            <person name="Kaul S."/>
            <person name="White O."/>
            <person name="Alonso J."/>
            <person name="Altafi H."/>
            <person name="Araujo R."/>
            <person name="Bowman C.L."/>
            <person name="Brooks S.Y."/>
            <person name="Buehler E."/>
            <person name="Chan A."/>
            <person name="Chao Q."/>
            <person name="Chen H."/>
            <person name="Cheuk R.F."/>
            <person name="Chin C.W."/>
            <person name="Chung M.K."/>
            <person name="Conn L."/>
            <person name="Conway A.B."/>
            <person name="Conway A.R."/>
            <person name="Creasy T.H."/>
            <person name="Dewar K."/>
            <person name="Dunn P."/>
            <person name="Etgu P."/>
            <person name="Feldblyum T.V."/>
            <person name="Feng J.-D."/>
            <person name="Fong B."/>
            <person name="Fujii C.Y."/>
            <person name="Gill J.E."/>
            <person name="Goldsmith A.D."/>
            <person name="Haas B."/>
            <person name="Hansen N.F."/>
            <person name="Hughes B."/>
            <person name="Huizar L."/>
            <person name="Hunter J.L."/>
            <person name="Jenkins J."/>
            <person name="Johnson-Hopson C."/>
            <person name="Khan S."/>
            <person name="Khaykin E."/>
            <person name="Kim C.J."/>
            <person name="Koo H.L."/>
            <person name="Kremenetskaia I."/>
            <person name="Kurtz D.B."/>
            <person name="Kwan A."/>
            <person name="Lam B."/>
            <person name="Langin-Hooper S."/>
            <person name="Lee A."/>
            <person name="Lee J.M."/>
            <person name="Lenz C.A."/>
            <person name="Li J.H."/>
            <person name="Li Y.-P."/>
            <person name="Lin X."/>
            <person name="Liu S.X."/>
            <person name="Liu Z.A."/>
            <person name="Luros J.S."/>
            <person name="Maiti R."/>
            <person name="Marziali A."/>
            <person name="Militscher J."/>
            <person name="Miranda M."/>
            <person name="Nguyen M."/>
            <person name="Nierman W.C."/>
            <person name="Osborne B.I."/>
            <person name="Pai G."/>
            <person name="Peterson J."/>
            <person name="Pham P.K."/>
            <person name="Rizzo M."/>
            <person name="Rooney T."/>
            <person name="Rowley D."/>
            <person name="Sakano H."/>
            <person name="Salzberg S.L."/>
            <person name="Schwartz J.R."/>
            <person name="Shinn P."/>
            <person name="Southwick A.M."/>
            <person name="Sun H."/>
            <person name="Tallon L.J."/>
            <person name="Tambunga G."/>
            <person name="Toriumi M.J."/>
            <person name="Town C.D."/>
            <person name="Utterback T."/>
            <person name="Van Aken S."/>
            <person name="Vaysberg M."/>
            <person name="Vysotskaia V.S."/>
            <person name="Walker M."/>
            <person name="Wu D."/>
            <person name="Yu G."/>
            <person name="Fraser C.M."/>
            <person name="Venter J.C."/>
            <person name="Davis R.W."/>
        </authorList>
    </citation>
    <scope>NUCLEOTIDE SEQUENCE [LARGE SCALE GENOMIC DNA]</scope>
    <source>
        <strain>cv. Columbia</strain>
    </source>
</reference>
<reference key="3">
    <citation type="journal article" date="2017" name="Plant J.">
        <title>Araport11: a complete reannotation of the Arabidopsis thaliana reference genome.</title>
        <authorList>
            <person name="Cheng C.Y."/>
            <person name="Krishnakumar V."/>
            <person name="Chan A.P."/>
            <person name="Thibaud-Nissen F."/>
            <person name="Schobel S."/>
            <person name="Town C.D."/>
        </authorList>
    </citation>
    <scope>GENOME REANNOTATION</scope>
    <source>
        <strain>cv. Columbia</strain>
    </source>
</reference>
<reference key="4">
    <citation type="journal article" date="2003" name="Science">
        <title>Empirical analysis of transcriptional activity in the Arabidopsis genome.</title>
        <authorList>
            <person name="Yamada K."/>
            <person name="Lim J."/>
            <person name="Dale J.M."/>
            <person name="Chen H."/>
            <person name="Shinn P."/>
            <person name="Palm C.J."/>
            <person name="Southwick A.M."/>
            <person name="Wu H.C."/>
            <person name="Kim C.J."/>
            <person name="Nguyen M."/>
            <person name="Pham P.K."/>
            <person name="Cheuk R.F."/>
            <person name="Karlin-Newmann G."/>
            <person name="Liu S.X."/>
            <person name="Lam B."/>
            <person name="Sakano H."/>
            <person name="Wu T."/>
            <person name="Yu G."/>
            <person name="Miranda M."/>
            <person name="Quach H.L."/>
            <person name="Tripp M."/>
            <person name="Chang C.H."/>
            <person name="Lee J.M."/>
            <person name="Toriumi M.J."/>
            <person name="Chan M.M."/>
            <person name="Tang C.C."/>
            <person name="Onodera C.S."/>
            <person name="Deng J.M."/>
            <person name="Akiyama K."/>
            <person name="Ansari Y."/>
            <person name="Arakawa T."/>
            <person name="Banh J."/>
            <person name="Banno F."/>
            <person name="Bowser L."/>
            <person name="Brooks S.Y."/>
            <person name="Carninci P."/>
            <person name="Chao Q."/>
            <person name="Choy N."/>
            <person name="Enju A."/>
            <person name="Goldsmith A.D."/>
            <person name="Gurjal M."/>
            <person name="Hansen N.F."/>
            <person name="Hayashizaki Y."/>
            <person name="Johnson-Hopson C."/>
            <person name="Hsuan V.W."/>
            <person name="Iida K."/>
            <person name="Karnes M."/>
            <person name="Khan S."/>
            <person name="Koesema E."/>
            <person name="Ishida J."/>
            <person name="Jiang P.X."/>
            <person name="Jones T."/>
            <person name="Kawai J."/>
            <person name="Kamiya A."/>
            <person name="Meyers C."/>
            <person name="Nakajima M."/>
            <person name="Narusaka M."/>
            <person name="Seki M."/>
            <person name="Sakurai T."/>
            <person name="Satou M."/>
            <person name="Tamse R."/>
            <person name="Vaysberg M."/>
            <person name="Wallender E.K."/>
            <person name="Wong C."/>
            <person name="Yamamura Y."/>
            <person name="Yuan S."/>
            <person name="Shinozaki K."/>
            <person name="Davis R.W."/>
            <person name="Theologis A."/>
            <person name="Ecker J.R."/>
        </authorList>
    </citation>
    <scope>NUCLEOTIDE SEQUENCE [LARGE SCALE MRNA]</scope>
    <source>
        <strain>cv. Columbia</strain>
    </source>
</reference>
<reference key="5">
    <citation type="journal article" date="2009" name="DNA Res.">
        <title>Analysis of multiple occurrences of alternative splicing events in Arabidopsis thaliana using novel sequenced full-length cDNAs.</title>
        <authorList>
            <person name="Iida K."/>
            <person name="Fukami-Kobayashi K."/>
            <person name="Toyoda A."/>
            <person name="Sakaki Y."/>
            <person name="Kobayashi M."/>
            <person name="Seki M."/>
            <person name="Shinozaki K."/>
        </authorList>
    </citation>
    <scope>NUCLEOTIDE SEQUENCE [LARGE SCALE MRNA]</scope>
</reference>
<reference key="6">
    <citation type="journal article" date="1990" name="Gene">
        <title>Unique composition of plastid chaperonin-60: alpha and beta polypeptide-encoding genes are highly divergent.</title>
        <authorList>
            <person name="Martel R."/>
            <person name="Cloney L.P."/>
            <person name="Pelcher L.E."/>
            <person name="Hemmingsen S.M."/>
        </authorList>
    </citation>
    <scope>NUCLEOTIDE SEQUENCE [MRNA] OF 127-312</scope>
    <source>
        <strain>cv. Columbia</strain>
    </source>
</reference>
<reference key="7">
    <citation type="journal article" date="2008" name="J. Exp. Bot.">
        <title>Association of Rubisco activase with chaperonin-60beta: a possible mechanism for protecting photosynthesis during heat stress.</title>
        <authorList>
            <person name="Salvucci M.E."/>
        </authorList>
    </citation>
    <scope>FUNCTION</scope>
    <scope>PROTEIN SEQUENCE OF 55-68</scope>
    <scope>INTERACTION WITH RAB</scope>
</reference>
<reference key="8">
    <citation type="journal article" date="1993" name="Plant Physiol.">
        <title>Differential involvement of the circadian clock in the expression of genes required for ribulose-1,5-bisphosphate carboxylase/oxygenase synthesis, assembly, and activation in Arabidopsis thaliana.</title>
        <authorList>
            <person name="Pilgrim M.L."/>
            <person name="McClung C.R."/>
        </authorList>
    </citation>
    <scope>INDUCTION BY LIGHT</scope>
</reference>
<reference key="9">
    <citation type="journal article" date="1994" name="Plant Mol. Biol.">
        <title>Expression of one of the members of the Arabidopsis chaperonin 60 beta gene family is developmentally regulated and wound-repressible.</title>
        <authorList>
            <person name="Zabaleta E."/>
            <person name="Assad N."/>
            <person name="Oropeza A."/>
            <person name="Salerno G."/>
            <person name="Herrera-Estrella L."/>
        </authorList>
    </citation>
    <scope>TISSUE SPECIFICITY</scope>
    <scope>INDUCTION BY WOUNDING AND HEAT</scope>
</reference>
<reference key="10">
    <citation type="journal article" date="1995" name="J. Biol. Chem.">
        <title>Functional characterization of the higher plant chloroplast chaperonins.</title>
        <authorList>
            <person name="Viitanen P.V."/>
            <person name="Schmidt M."/>
            <person name="Buchner J."/>
            <person name="Suzuki T."/>
            <person name="Vierling E."/>
            <person name="Dickson R."/>
            <person name="Lorimer G.H."/>
            <person name="Gatenby A."/>
            <person name="Soll J."/>
        </authorList>
    </citation>
    <scope>FUNCTION</scope>
    <scope>INTERACTION</scope>
</reference>
<reference key="11">
    <citation type="journal article" date="2001" name="Cell Stress Chaperones">
        <title>Arabidopsis thaliana type I and II chaperonins.</title>
        <authorList>
            <person name="Hill J.E."/>
            <person name="Hemmingsen S.M."/>
        </authorList>
    </citation>
    <scope>GENE FAMILY</scope>
    <scope>NOMENCLATURE</scope>
</reference>
<reference key="12">
    <citation type="journal article" date="2003" name="Plant Cell Physiol.">
        <title>Deletion of a chaperonin 60 beta gene leads to cell death in the Arabidopsis lesion initiation 1 mutant.</title>
        <authorList>
            <person name="Ishikawa A."/>
            <person name="Tanaka H."/>
            <person name="Nakai M."/>
            <person name="Asahi T."/>
        </authorList>
    </citation>
    <scope>FUNCTION</scope>
    <scope>DISRUPTION PHENOTYPE</scope>
</reference>
<reference key="13">
    <citation type="journal article" date="2009" name="BMC Plant Biol.">
        <title>Plastid chaperonin proteins Cpn60 alpha and Cpn60 beta are required for plastid division in Arabidopsis thaliana.</title>
        <authorList>
            <person name="Suzuki K."/>
            <person name="Nakanishi H."/>
            <person name="Bower J."/>
            <person name="Yoder D.W."/>
            <person name="Osteryoung K.W."/>
            <person name="Miyagishima S.Y."/>
        </authorList>
    </citation>
    <scope>FUNCTION</scope>
    <scope>SUBCELLULAR LOCATION</scope>
    <scope>DISRUPTION PHENOTYPE</scope>
</reference>
<reference key="14">
    <citation type="journal article" date="2009" name="Cell Stress Chaperones">
        <title>Differential effects of co-chaperonin homologs on cpn60 oligomers.</title>
        <authorList>
            <person name="Bonshtien A.L."/>
            <person name="Parnas A."/>
            <person name="Sharkia R."/>
            <person name="Niv A."/>
            <person name="Mizrahi I."/>
            <person name="Azem A."/>
            <person name="Weiss C."/>
        </authorList>
    </citation>
    <scope>FUNCTION</scope>
    <scope>IDENTIFICATION IN CPN60 COMPLEX</scope>
</reference>
<reference key="15">
    <citation type="journal article" date="2009" name="Plant Physiol.">
        <title>Large-scale Arabidopsis phosphoproteome profiling reveals novel chloroplast kinase substrates and phosphorylation networks.</title>
        <authorList>
            <person name="Reiland S."/>
            <person name="Messerli G."/>
            <person name="Baerenfaller K."/>
            <person name="Gerrits B."/>
            <person name="Endler A."/>
            <person name="Grossmann J."/>
            <person name="Gruissem W."/>
            <person name="Baginsky S."/>
        </authorList>
    </citation>
    <scope>PHOSPHORYLATION [LARGE SCALE ANALYSIS] AT SER-478</scope>
    <scope>IDENTIFICATION BY MASS SPECTROMETRY [LARGE SCALE ANALYSIS]</scope>
</reference>
<reference key="16">
    <citation type="journal article" date="2011" name="PLoS Biol.">
        <title>A chaperonin subunit with unique structures is essential for folding of a specific substrate.</title>
        <authorList>
            <person name="Peng L."/>
            <person name="Fukao Y."/>
            <person name="Myouga F."/>
            <person name="Motohashi R."/>
            <person name="Shinozaki K."/>
            <person name="Shikanai T."/>
        </authorList>
    </citation>
    <scope>GENE FAMILY</scope>
    <scope>NOMENCLATURE</scope>
</reference>
<dbReference type="EMBL" id="AC005223">
    <property type="protein sequence ID" value="AAD10647.1"/>
    <property type="molecule type" value="Genomic_DNA"/>
</dbReference>
<dbReference type="EMBL" id="CP002684">
    <property type="protein sequence ID" value="AEE33251.1"/>
    <property type="molecule type" value="Genomic_DNA"/>
</dbReference>
<dbReference type="EMBL" id="CP002684">
    <property type="protein sequence ID" value="AEE33252.1"/>
    <property type="molecule type" value="Genomic_DNA"/>
</dbReference>
<dbReference type="EMBL" id="CP002684">
    <property type="protein sequence ID" value="ANM58183.1"/>
    <property type="molecule type" value="Genomic_DNA"/>
</dbReference>
<dbReference type="EMBL" id="CP002684">
    <property type="protein sequence ID" value="ANM58184.1"/>
    <property type="molecule type" value="Genomic_DNA"/>
</dbReference>
<dbReference type="EMBL" id="CP002684">
    <property type="protein sequence ID" value="ANM58185.1"/>
    <property type="molecule type" value="Genomic_DNA"/>
</dbReference>
<dbReference type="EMBL" id="AF386945">
    <property type="protein sequence ID" value="AAK62390.1"/>
    <property type="molecule type" value="mRNA"/>
</dbReference>
<dbReference type="EMBL" id="AY081501">
    <property type="protein sequence ID" value="AAM10063.1"/>
    <property type="molecule type" value="mRNA"/>
</dbReference>
<dbReference type="EMBL" id="AK316889">
    <property type="protein sequence ID" value="BAH19596.1"/>
    <property type="molecule type" value="mRNA"/>
</dbReference>
<dbReference type="EMBL" id="AK317612">
    <property type="protein sequence ID" value="BAH20275.1"/>
    <property type="molecule type" value="mRNA"/>
</dbReference>
<dbReference type="EMBL" id="M35598">
    <property type="protein sequence ID" value="AAA32725.1"/>
    <property type="molecule type" value="mRNA"/>
</dbReference>
<dbReference type="PIR" id="B96597">
    <property type="entry name" value="B96597"/>
</dbReference>
<dbReference type="PIR" id="JT0901">
    <property type="entry name" value="JT0901"/>
</dbReference>
<dbReference type="PIR" id="PW0008">
    <property type="entry name" value="PW0008"/>
</dbReference>
<dbReference type="SMR" id="P21240"/>
<dbReference type="BioGRID" id="27221">
    <property type="interactions" value="35"/>
</dbReference>
<dbReference type="FunCoup" id="P21240">
    <property type="interactions" value="1424"/>
</dbReference>
<dbReference type="IntAct" id="P21240">
    <property type="interactions" value="3"/>
</dbReference>
<dbReference type="MINT" id="P21240"/>
<dbReference type="STRING" id="3702.P21240"/>
<dbReference type="iPTMnet" id="P21240"/>
<dbReference type="MetOSite" id="P21240"/>
<dbReference type="PaxDb" id="3702-AT1G55490.2"/>
<dbReference type="ProteomicsDB" id="224487"/>
<dbReference type="EnsemblPlants" id="AT1G55490.1">
    <property type="protein sequence ID" value="AT1G55490.1"/>
    <property type="gene ID" value="AT1G55490"/>
</dbReference>
<dbReference type="EnsemblPlants" id="AT1G55490.2">
    <property type="protein sequence ID" value="AT1G55490.2"/>
    <property type="gene ID" value="AT1G55490"/>
</dbReference>
<dbReference type="EnsemblPlants" id="AT1G55490.3">
    <property type="protein sequence ID" value="AT1G55490.3"/>
    <property type="gene ID" value="AT1G55490"/>
</dbReference>
<dbReference type="EnsemblPlants" id="AT1G55490.4">
    <property type="protein sequence ID" value="AT1G55490.4"/>
    <property type="gene ID" value="AT1G55490"/>
</dbReference>
<dbReference type="EnsemblPlants" id="AT1G55490.5">
    <property type="protein sequence ID" value="AT1G55490.5"/>
    <property type="gene ID" value="AT1G55490"/>
</dbReference>
<dbReference type="GeneID" id="841996"/>
<dbReference type="Gramene" id="AT1G55490.1">
    <property type="protein sequence ID" value="AT1G55490.1"/>
    <property type="gene ID" value="AT1G55490"/>
</dbReference>
<dbReference type="Gramene" id="AT1G55490.2">
    <property type="protein sequence ID" value="AT1G55490.2"/>
    <property type="gene ID" value="AT1G55490"/>
</dbReference>
<dbReference type="Gramene" id="AT1G55490.3">
    <property type="protein sequence ID" value="AT1G55490.3"/>
    <property type="gene ID" value="AT1G55490"/>
</dbReference>
<dbReference type="Gramene" id="AT1G55490.4">
    <property type="protein sequence ID" value="AT1G55490.4"/>
    <property type="gene ID" value="AT1G55490"/>
</dbReference>
<dbReference type="Gramene" id="AT1G55490.5">
    <property type="protein sequence ID" value="AT1G55490.5"/>
    <property type="gene ID" value="AT1G55490"/>
</dbReference>
<dbReference type="KEGG" id="ath:AT1G55490"/>
<dbReference type="Araport" id="AT1G55490"/>
<dbReference type="TAIR" id="AT1G55490">
    <property type="gene designation" value="CPN60B"/>
</dbReference>
<dbReference type="eggNOG" id="KOG0356">
    <property type="taxonomic scope" value="Eukaryota"/>
</dbReference>
<dbReference type="HOGENOM" id="CLU_016503_4_1_1"/>
<dbReference type="InParanoid" id="P21240"/>
<dbReference type="OMA" id="CCLENAS"/>
<dbReference type="OrthoDB" id="1066042at2759"/>
<dbReference type="PhylomeDB" id="P21240"/>
<dbReference type="CD-CODE" id="4299E36E">
    <property type="entry name" value="Nucleolus"/>
</dbReference>
<dbReference type="PRO" id="PR:P21240"/>
<dbReference type="Proteomes" id="UP000006548">
    <property type="component" value="Chromosome 1"/>
</dbReference>
<dbReference type="ExpressionAtlas" id="P21240">
    <property type="expression patterns" value="baseline and differential"/>
</dbReference>
<dbReference type="GO" id="GO:0048046">
    <property type="term" value="C:apoplast"/>
    <property type="evidence" value="ECO:0007005"/>
    <property type="project" value="TAIR"/>
</dbReference>
<dbReference type="GO" id="GO:0009507">
    <property type="term" value="C:chloroplast"/>
    <property type="evidence" value="ECO:0007005"/>
    <property type="project" value="TAIR"/>
</dbReference>
<dbReference type="GO" id="GO:0009941">
    <property type="term" value="C:chloroplast envelope"/>
    <property type="evidence" value="ECO:0007005"/>
    <property type="project" value="TAIR"/>
</dbReference>
<dbReference type="GO" id="GO:0009570">
    <property type="term" value="C:chloroplast stroma"/>
    <property type="evidence" value="ECO:0007005"/>
    <property type="project" value="TAIR"/>
</dbReference>
<dbReference type="GO" id="GO:0022626">
    <property type="term" value="C:cytosolic ribosome"/>
    <property type="evidence" value="ECO:0007005"/>
    <property type="project" value="TAIR"/>
</dbReference>
<dbReference type="GO" id="GO:0005634">
    <property type="term" value="C:nucleus"/>
    <property type="evidence" value="ECO:0007005"/>
    <property type="project" value="TAIR"/>
</dbReference>
<dbReference type="GO" id="GO:0010319">
    <property type="term" value="C:stromule"/>
    <property type="evidence" value="ECO:0000314"/>
    <property type="project" value="TAIR"/>
</dbReference>
<dbReference type="GO" id="GO:0005524">
    <property type="term" value="F:ATP binding"/>
    <property type="evidence" value="ECO:0007669"/>
    <property type="project" value="UniProtKB-KW"/>
</dbReference>
<dbReference type="GO" id="GO:0140662">
    <property type="term" value="F:ATP-dependent protein folding chaperone"/>
    <property type="evidence" value="ECO:0007669"/>
    <property type="project" value="InterPro"/>
</dbReference>
<dbReference type="GO" id="GO:0003729">
    <property type="term" value="F:mRNA binding"/>
    <property type="evidence" value="ECO:0000314"/>
    <property type="project" value="TAIR"/>
</dbReference>
<dbReference type="GO" id="GO:0019904">
    <property type="term" value="F:protein domain specific binding"/>
    <property type="evidence" value="ECO:0000353"/>
    <property type="project" value="CAFA"/>
</dbReference>
<dbReference type="GO" id="GO:0008219">
    <property type="term" value="P:cell death"/>
    <property type="evidence" value="ECO:0000315"/>
    <property type="project" value="TAIR"/>
</dbReference>
<dbReference type="GO" id="GO:0051085">
    <property type="term" value="P:chaperone cofactor-dependent protein refolding"/>
    <property type="evidence" value="ECO:0000314"/>
    <property type="project" value="TAIR"/>
</dbReference>
<dbReference type="GO" id="GO:0042026">
    <property type="term" value="P:protein refolding"/>
    <property type="evidence" value="ECO:0007669"/>
    <property type="project" value="InterPro"/>
</dbReference>
<dbReference type="GO" id="GO:0009409">
    <property type="term" value="P:response to cold"/>
    <property type="evidence" value="ECO:0000270"/>
    <property type="project" value="TAIR"/>
</dbReference>
<dbReference type="GO" id="GO:0009627">
    <property type="term" value="P:systemic acquired resistance"/>
    <property type="evidence" value="ECO:0000315"/>
    <property type="project" value="TAIR"/>
</dbReference>
<dbReference type="CDD" id="cd03344">
    <property type="entry name" value="GroEL"/>
    <property type="match status" value="1"/>
</dbReference>
<dbReference type="FunFam" id="3.50.7.10:FF:000001">
    <property type="entry name" value="60 kDa chaperonin"/>
    <property type="match status" value="1"/>
</dbReference>
<dbReference type="Gene3D" id="3.50.7.10">
    <property type="entry name" value="GroEL"/>
    <property type="match status" value="1"/>
</dbReference>
<dbReference type="Gene3D" id="1.10.560.10">
    <property type="entry name" value="GroEL-like equatorial domain"/>
    <property type="match status" value="1"/>
</dbReference>
<dbReference type="Gene3D" id="3.30.260.10">
    <property type="entry name" value="TCP-1-like chaperonin intermediate domain"/>
    <property type="match status" value="1"/>
</dbReference>
<dbReference type="HAMAP" id="MF_00600">
    <property type="entry name" value="CH60"/>
    <property type="match status" value="1"/>
</dbReference>
<dbReference type="InterPro" id="IPR018370">
    <property type="entry name" value="Chaperonin_Cpn60_CS"/>
</dbReference>
<dbReference type="InterPro" id="IPR001844">
    <property type="entry name" value="Cpn60/GroEL"/>
</dbReference>
<dbReference type="InterPro" id="IPR002423">
    <property type="entry name" value="Cpn60/GroEL/TCP-1"/>
</dbReference>
<dbReference type="InterPro" id="IPR027409">
    <property type="entry name" value="GroEL-like_apical_dom_sf"/>
</dbReference>
<dbReference type="InterPro" id="IPR027413">
    <property type="entry name" value="GROEL-like_equatorial_sf"/>
</dbReference>
<dbReference type="InterPro" id="IPR027410">
    <property type="entry name" value="TCP-1-like_intermed_sf"/>
</dbReference>
<dbReference type="NCBIfam" id="TIGR02348">
    <property type="entry name" value="GroEL"/>
    <property type="match status" value="1"/>
</dbReference>
<dbReference type="NCBIfam" id="NF000592">
    <property type="entry name" value="PRK00013.1"/>
    <property type="match status" value="1"/>
</dbReference>
<dbReference type="NCBIfam" id="NF009487">
    <property type="entry name" value="PRK12849.1"/>
    <property type="match status" value="1"/>
</dbReference>
<dbReference type="NCBIfam" id="NF009488">
    <property type="entry name" value="PRK12850.1"/>
    <property type="match status" value="1"/>
</dbReference>
<dbReference type="NCBIfam" id="NF009489">
    <property type="entry name" value="PRK12851.1"/>
    <property type="match status" value="1"/>
</dbReference>
<dbReference type="PANTHER" id="PTHR45633">
    <property type="entry name" value="60 KDA HEAT SHOCK PROTEIN, MITOCHONDRIAL"/>
    <property type="match status" value="1"/>
</dbReference>
<dbReference type="Pfam" id="PF00118">
    <property type="entry name" value="Cpn60_TCP1"/>
    <property type="match status" value="1"/>
</dbReference>
<dbReference type="PRINTS" id="PR00298">
    <property type="entry name" value="CHAPERONIN60"/>
</dbReference>
<dbReference type="SUPFAM" id="SSF52029">
    <property type="entry name" value="GroEL apical domain-like"/>
    <property type="match status" value="1"/>
</dbReference>
<dbReference type="SUPFAM" id="SSF48592">
    <property type="entry name" value="GroEL equatorial domain-like"/>
    <property type="match status" value="1"/>
</dbReference>
<dbReference type="SUPFAM" id="SSF54849">
    <property type="entry name" value="GroEL-intermediate domain like"/>
    <property type="match status" value="1"/>
</dbReference>
<dbReference type="PROSITE" id="PS00296">
    <property type="entry name" value="CHAPERONINS_CPN60"/>
    <property type="match status" value="1"/>
</dbReference>
<accession>P21240</accession>
<accession>B9DFS9</accession>
<accession>B9DHQ8</accession>
<accession>Q9SAV2</accession>
<protein>
    <recommendedName>
        <fullName>Chaperonin 60 subunit beta 1, chloroplastic</fullName>
        <shortName>CPN-60 beta 1</shortName>
    </recommendedName>
    <alternativeName>
        <fullName>60 kDa chaperonin subunit beta 1</fullName>
    </alternativeName>
    <alternativeName>
        <fullName>RuBisCO large subunit-binding protein subunit beta, chloroplastic</fullName>
    </alternativeName>
</protein>
<sequence length="600" mass="63809">MASTFTATSSIGSMVAPNGHKSDKKLISKLSSSSFGRRQSVCPRPRRSSSAIVCAAKELHFNKDGTTIRRLQAGVNKLADLVGVTLGPKGRNVVLESKYGSPRIVNDGVTVAREVELEDPVENIGAKLVRQAAAKTNDLAGDGTTTSVVLAQGFIAEGVKVVAAGANPVLITRGIEKTAKALVTELKKMSKEVEDSELADVAAVSAGNNDEIGNMIAEAMSKVGRKGVVTLEEGKSAENNLYVVEGMQFDRGYISPYFVTDSEKMSVEFDNCKLLLVDKKITNARDLVGVLEDAIRGGYPILIIAEDIEQEALATLVVNKLRGTLKIAALRAPGFGERKSQYLDDIAILTGATVIREEVGLSLDKAGKEVLGNASKVVLTKETSTIVGDGSTQDAVKKRVTQIKNLIEQAEQDYEKEKLNERIAKLSGGVAVIQVGAQTETELKEKKLRVEDALNATKAAVEEGIVVGGGCTLLRLASKVDAIKATLDNDEEKVGADIVKRALSYPLKLIAKNAGVNGSVVSEKVLSNDNVKFGYNAATGKYEDLMAAGIIDPTKVVRCCLEHAASVAKTFLMSDCVVVEIKEPEPVPVGNPMDNSGYGY</sequence>
<evidence type="ECO:0000250" key="1">
    <source>
        <dbReference type="UniProtKB" id="P21238"/>
    </source>
</evidence>
<evidence type="ECO:0000256" key="2">
    <source>
        <dbReference type="SAM" id="MobiDB-lite"/>
    </source>
</evidence>
<evidence type="ECO:0000269" key="3">
    <source>
    </source>
</evidence>
<evidence type="ECO:0000269" key="4">
    <source>
    </source>
</evidence>
<evidence type="ECO:0000269" key="5">
    <source>
    </source>
</evidence>
<evidence type="ECO:0000269" key="6">
    <source>
    </source>
</evidence>
<evidence type="ECO:0000269" key="7">
    <source>
    </source>
</evidence>
<evidence type="ECO:0000269" key="8">
    <source>
    </source>
</evidence>
<evidence type="ECO:0000269" key="9">
    <source ref="10"/>
</evidence>
<evidence type="ECO:0000305" key="10"/>
<evidence type="ECO:0007744" key="11">
    <source>
    </source>
</evidence>